<gene>
    <name type="primary">HERVK_113</name>
</gene>
<evidence type="ECO:0000250" key="1"/>
<evidence type="ECO:0000255" key="2">
    <source>
        <dbReference type="PROSITE-ProRule" id="PRU00092"/>
    </source>
</evidence>
<evidence type="ECO:0000255" key="3">
    <source>
        <dbReference type="PROSITE-ProRule" id="PRU00275"/>
    </source>
</evidence>
<evidence type="ECO:0000255" key="4">
    <source>
        <dbReference type="PROSITE-ProRule" id="PRU10094"/>
    </source>
</evidence>
<evidence type="ECO:0000305" key="5"/>
<name>VP113_HUMAN</name>
<accession>P63121</accession>
<keyword id="KW-0064">Aspartyl protease</keyword>
<keyword id="KW-0068">Autocatalytic cleavage</keyword>
<keyword id="KW-0895">ERV</keyword>
<keyword id="KW-0378">Hydrolase</keyword>
<keyword id="KW-0645">Protease</keyword>
<keyword id="KW-1185">Reference proteome</keyword>
<keyword id="KW-0688">Ribosomal frameshifting</keyword>
<keyword id="KW-0814">Transposable element</keyword>
<sequence length="156" mass="17091">WASQVSENRPVCKAIIQGKQFEGLVDTGADVSIIALNQWPKNWPKQKAVTGLVGIGTASEVYQSTEILHCLGPDNQESTVQPMITSIPLNLWGRDLLQQWGAEITMPAPLYSPTSQKIMTKMGYIPGKGLGKNEDGIKIPVEAKINQKREGIGYPF</sequence>
<feature type="chain" id="PRO_0000199540" description="Endogenous retrovirus group K member 113 Pro protein">
    <location>
        <begin position="1"/>
        <end position="156"/>
    </location>
</feature>
<feature type="domain" description="Peptidase A2" evidence="3">
    <location>
        <begin position="21"/>
        <end position="96"/>
    </location>
</feature>
<feature type="domain" description="G-patch" evidence="2">
    <location>
        <begin position="111"/>
        <end position="156"/>
    </location>
</feature>
<feature type="active site" evidence="4">
    <location>
        <position position="26"/>
    </location>
</feature>
<comment type="function">
    <text>Retroviral proteases have roles in the processing of the primary translation products and the maturation of the viral particle. Endogenous Pro proteins may have kept, lost or modified their original function during evolution.</text>
</comment>
<comment type="catalytic activity">
    <reaction>
        <text>Processing at the authentic HIV-1 PR recognition site and release of the mature p17 matrix and the p24 capsid protein, as a result of the cleavage of the -SQNY-|-PIVQ- cleavage site.</text>
        <dbReference type="EC" id="3.4.23.50"/>
    </reaction>
</comment>
<comment type="subunit">
    <text evidence="1">Active as a homodimer.</text>
</comment>
<comment type="alternative products">
    <event type="ribosomal frameshifting"/>
    <isoform>
        <id>P63121-1</id>
        <name>1</name>
        <sequence type="displayed"/>
    </isoform>
    <text>This protein is synthesized as Gag-Pro and Gag-Pro-Pol polyprotein. These polyproteins are thought, by similarity with type-B retroviruses, to be generated by -1 frameshifts occurring at the Gag-Pro and Pro-Pol genes boundaries.</text>
</comment>
<comment type="PTM">
    <text evidence="1">Autoproteolytically processed at the N-terminus. Expected C-terminal autoprocessing not detected. The sequence shown is that of the processed Pro protein (By similarity).</text>
</comment>
<comment type="miscellaneous">
    <text>Insertional polymorphism. Provirus present in 29% of tested individuals.</text>
</comment>
<comment type="similarity">
    <text evidence="5">Belongs to the peptidase A2 family. HERV class-II K(HML-2) subfamily.</text>
</comment>
<organism>
    <name type="scientific">Homo sapiens</name>
    <name type="common">Human</name>
    <dbReference type="NCBI Taxonomy" id="9606"/>
    <lineage>
        <taxon>Eukaryota</taxon>
        <taxon>Metazoa</taxon>
        <taxon>Chordata</taxon>
        <taxon>Craniata</taxon>
        <taxon>Vertebrata</taxon>
        <taxon>Euteleostomi</taxon>
        <taxon>Mammalia</taxon>
        <taxon>Eutheria</taxon>
        <taxon>Euarchontoglires</taxon>
        <taxon>Primates</taxon>
        <taxon>Haplorrhini</taxon>
        <taxon>Catarrhini</taxon>
        <taxon>Hominidae</taxon>
        <taxon>Homo</taxon>
    </lineage>
</organism>
<dbReference type="EC" id="3.4.23.50"/>
<dbReference type="EMBL" id="AC112702">
    <property type="status" value="NOT_ANNOTATED_CDS"/>
    <property type="molecule type" value="Genomic_DNA"/>
</dbReference>
<dbReference type="SMR" id="P63121"/>
<dbReference type="PhosphoSitePlus" id="P63121"/>
<dbReference type="BioMuta" id="HERVK_113"/>
<dbReference type="DMDM" id="52000852"/>
<dbReference type="neXtProt" id="NX_P63121"/>
<dbReference type="InParanoid" id="P63121"/>
<dbReference type="PhylomeDB" id="P63121"/>
<dbReference type="Pharos" id="P63121">
    <property type="development level" value="Tdark"/>
</dbReference>
<dbReference type="Proteomes" id="UP000005640">
    <property type="component" value="Unplaced"/>
</dbReference>
<dbReference type="RNAct" id="P63121">
    <property type="molecule type" value="protein"/>
</dbReference>
<dbReference type="GO" id="GO:0004190">
    <property type="term" value="F:aspartic-type endopeptidase activity"/>
    <property type="evidence" value="ECO:0007669"/>
    <property type="project" value="UniProtKB-KW"/>
</dbReference>
<dbReference type="GO" id="GO:0003676">
    <property type="term" value="F:nucleic acid binding"/>
    <property type="evidence" value="ECO:0007669"/>
    <property type="project" value="InterPro"/>
</dbReference>
<dbReference type="GO" id="GO:0006508">
    <property type="term" value="P:proteolysis"/>
    <property type="evidence" value="ECO:0007669"/>
    <property type="project" value="UniProtKB-KW"/>
</dbReference>
<dbReference type="GO" id="GO:0075523">
    <property type="term" value="P:viral translational frameshifting"/>
    <property type="evidence" value="ECO:0007669"/>
    <property type="project" value="UniProtKB-KW"/>
</dbReference>
<dbReference type="CDD" id="cd05482">
    <property type="entry name" value="HIV_retropepsin_like"/>
    <property type="match status" value="1"/>
</dbReference>
<dbReference type="Gene3D" id="2.40.70.10">
    <property type="entry name" value="Acid Proteases"/>
    <property type="match status" value="1"/>
</dbReference>
<dbReference type="InterPro" id="IPR001969">
    <property type="entry name" value="Aspartic_peptidase_AS"/>
</dbReference>
<dbReference type="InterPro" id="IPR000467">
    <property type="entry name" value="G_patch_dom"/>
</dbReference>
<dbReference type="InterPro" id="IPR051592">
    <property type="entry name" value="HERV-K_Pro_peptidase_A2"/>
</dbReference>
<dbReference type="InterPro" id="IPR001995">
    <property type="entry name" value="Peptidase_A2_cat"/>
</dbReference>
<dbReference type="InterPro" id="IPR021109">
    <property type="entry name" value="Peptidase_aspartic_dom_sf"/>
</dbReference>
<dbReference type="InterPro" id="IPR034170">
    <property type="entry name" value="Retropepsin-like_cat_dom"/>
</dbReference>
<dbReference type="InterPro" id="IPR018061">
    <property type="entry name" value="Retropepsins"/>
</dbReference>
<dbReference type="PANTHER" id="PTHR19422">
    <property type="entry name" value="GAG RETROVIRAL POLYPROTEIN"/>
    <property type="match status" value="1"/>
</dbReference>
<dbReference type="PANTHER" id="PTHR19422:SF123">
    <property type="entry name" value="RT1 CLASS I, LOCUS CE15"/>
    <property type="match status" value="1"/>
</dbReference>
<dbReference type="Pfam" id="PF01585">
    <property type="entry name" value="G-patch"/>
    <property type="match status" value="1"/>
</dbReference>
<dbReference type="Pfam" id="PF00077">
    <property type="entry name" value="RVP"/>
    <property type="match status" value="1"/>
</dbReference>
<dbReference type="SMART" id="SM00443">
    <property type="entry name" value="G_patch"/>
    <property type="match status" value="1"/>
</dbReference>
<dbReference type="SUPFAM" id="SSF50630">
    <property type="entry name" value="Acid proteases"/>
    <property type="match status" value="1"/>
</dbReference>
<dbReference type="PROSITE" id="PS50175">
    <property type="entry name" value="ASP_PROT_RETROV"/>
    <property type="match status" value="1"/>
</dbReference>
<dbReference type="PROSITE" id="PS00141">
    <property type="entry name" value="ASP_PROTEASE"/>
    <property type="match status" value="1"/>
</dbReference>
<dbReference type="PROSITE" id="PS50174">
    <property type="entry name" value="G_PATCH"/>
    <property type="match status" value="1"/>
</dbReference>
<reference key="1">
    <citation type="journal article" date="2004" name="Nature">
        <title>The DNA sequence and biology of human chromosome 19.</title>
        <authorList>
            <person name="Grimwood J."/>
            <person name="Gordon L.A."/>
            <person name="Olsen A.S."/>
            <person name="Terry A."/>
            <person name="Schmutz J."/>
            <person name="Lamerdin J.E."/>
            <person name="Hellsten U."/>
            <person name="Goodstein D."/>
            <person name="Couronne O."/>
            <person name="Tran-Gyamfi M."/>
            <person name="Aerts A."/>
            <person name="Altherr M."/>
            <person name="Ashworth L."/>
            <person name="Bajorek E."/>
            <person name="Black S."/>
            <person name="Branscomb E."/>
            <person name="Caenepeel S."/>
            <person name="Carrano A.V."/>
            <person name="Caoile C."/>
            <person name="Chan Y.M."/>
            <person name="Christensen M."/>
            <person name="Cleland C.A."/>
            <person name="Copeland A."/>
            <person name="Dalin E."/>
            <person name="Dehal P."/>
            <person name="Denys M."/>
            <person name="Detter J.C."/>
            <person name="Escobar J."/>
            <person name="Flowers D."/>
            <person name="Fotopulos D."/>
            <person name="Garcia C."/>
            <person name="Georgescu A.M."/>
            <person name="Glavina T."/>
            <person name="Gomez M."/>
            <person name="Gonzales E."/>
            <person name="Groza M."/>
            <person name="Hammon N."/>
            <person name="Hawkins T."/>
            <person name="Haydu L."/>
            <person name="Ho I."/>
            <person name="Huang W."/>
            <person name="Israni S."/>
            <person name="Jett J."/>
            <person name="Kadner K."/>
            <person name="Kimball H."/>
            <person name="Kobayashi A."/>
            <person name="Larionov V."/>
            <person name="Leem S.-H."/>
            <person name="Lopez F."/>
            <person name="Lou Y."/>
            <person name="Lowry S."/>
            <person name="Malfatti S."/>
            <person name="Martinez D."/>
            <person name="McCready P.M."/>
            <person name="Medina C."/>
            <person name="Morgan J."/>
            <person name="Nelson K."/>
            <person name="Nolan M."/>
            <person name="Ovcharenko I."/>
            <person name="Pitluck S."/>
            <person name="Pollard M."/>
            <person name="Popkie A.P."/>
            <person name="Predki P."/>
            <person name="Quan G."/>
            <person name="Ramirez L."/>
            <person name="Rash S."/>
            <person name="Retterer J."/>
            <person name="Rodriguez A."/>
            <person name="Rogers S."/>
            <person name="Salamov A."/>
            <person name="Salazar A."/>
            <person name="She X."/>
            <person name="Smith D."/>
            <person name="Slezak T."/>
            <person name="Solovyev V."/>
            <person name="Thayer N."/>
            <person name="Tice H."/>
            <person name="Tsai M."/>
            <person name="Ustaszewska A."/>
            <person name="Vo N."/>
            <person name="Wagner M."/>
            <person name="Wheeler J."/>
            <person name="Wu K."/>
            <person name="Xie G."/>
            <person name="Yang J."/>
            <person name="Dubchak I."/>
            <person name="Furey T.S."/>
            <person name="DeJong P."/>
            <person name="Dickson M."/>
            <person name="Gordon D."/>
            <person name="Eichler E.E."/>
            <person name="Pennacchio L.A."/>
            <person name="Richardson P."/>
            <person name="Stubbs L."/>
            <person name="Rokhsar D.S."/>
            <person name="Myers R.M."/>
            <person name="Rubin E.M."/>
            <person name="Lucas S.M."/>
        </authorList>
    </citation>
    <scope>NUCLEOTIDE SEQUENCE [LARGE SCALE GENOMIC DNA]</scope>
</reference>
<reference key="2">
    <citation type="journal article" date="2001" name="Curr. Biol.">
        <title>Insertional polymorphisms of full-length endogenous retroviruses in humans.</title>
        <authorList>
            <person name="Turner G."/>
            <person name="Barbulescu M."/>
            <person name="Su M."/>
            <person name="Jensen-Seaman M.I."/>
            <person name="Kidd K.K."/>
            <person name="Lenz J."/>
        </authorList>
    </citation>
    <scope>IDENTIFICATION</scope>
</reference>
<proteinExistence type="inferred from homology"/>
<protein>
    <recommendedName>
        <fullName>Endogenous retrovirus group K member 113 Pro protein</fullName>
    </recommendedName>
    <alternativeName>
        <fullName>HERV-K113 envelope protein</fullName>
    </alternativeName>
    <alternativeName>
        <fullName>HERV-K_19p13.11 provirus ancestral Pro protein</fullName>
        <ecNumber>3.4.23.50</ecNumber>
    </alternativeName>
    <alternativeName>
        <fullName>Protease</fullName>
    </alternativeName>
    <alternativeName>
        <fullName>Proteinase</fullName>
        <shortName>PR</shortName>
    </alternativeName>
</protein>